<name>APT_HELHP</name>
<keyword id="KW-0963">Cytoplasm</keyword>
<keyword id="KW-0328">Glycosyltransferase</keyword>
<keyword id="KW-0660">Purine salvage</keyword>
<keyword id="KW-1185">Reference proteome</keyword>
<keyword id="KW-0808">Transferase</keyword>
<proteinExistence type="inferred from homology"/>
<organism>
    <name type="scientific">Helicobacter hepaticus (strain ATCC 51449 / 3B1)</name>
    <dbReference type="NCBI Taxonomy" id="235279"/>
    <lineage>
        <taxon>Bacteria</taxon>
        <taxon>Pseudomonadati</taxon>
        <taxon>Campylobacterota</taxon>
        <taxon>Epsilonproteobacteria</taxon>
        <taxon>Campylobacterales</taxon>
        <taxon>Helicobacteraceae</taxon>
        <taxon>Helicobacter</taxon>
    </lineage>
</organism>
<accession>Q7VGF2</accession>
<evidence type="ECO:0000255" key="1">
    <source>
        <dbReference type="HAMAP-Rule" id="MF_00004"/>
    </source>
</evidence>
<reference key="1">
    <citation type="journal article" date="2003" name="Proc. Natl. Acad. Sci. U.S.A.">
        <title>The complete genome sequence of the carcinogenic bacterium Helicobacter hepaticus.</title>
        <authorList>
            <person name="Suerbaum S."/>
            <person name="Josenhans C."/>
            <person name="Sterzenbach T."/>
            <person name="Drescher B."/>
            <person name="Brandt P."/>
            <person name="Bell M."/>
            <person name="Droege M."/>
            <person name="Fartmann B."/>
            <person name="Fischer H.-P."/>
            <person name="Ge Z."/>
            <person name="Hoerster A."/>
            <person name="Holland R."/>
            <person name="Klein K."/>
            <person name="Koenig J."/>
            <person name="Macko L."/>
            <person name="Mendz G.L."/>
            <person name="Nyakatura G."/>
            <person name="Schauer D.B."/>
            <person name="Shen Z."/>
            <person name="Weber J."/>
            <person name="Frosch M."/>
            <person name="Fox J.G."/>
        </authorList>
    </citation>
    <scope>NUCLEOTIDE SEQUENCE [LARGE SCALE GENOMIC DNA]</scope>
    <source>
        <strain>ATCC 51449 / 3B1</strain>
    </source>
</reference>
<sequence>MDKQKIADSIRAVYNYKPGVIFRDITTLIGDAEVFKEVINILRSRYENQSIDFIAAIEARGFIFGSALAYALGIGFVPIRKKGKLPYNTISEKYTLEYGTDELHIHTDAFRDKKNAKVVLIDDLIATGGTAEASVKLIKSIGAQCVEAAFVINLKGLEGEKKLAPYTQVFSIVEYEGK</sequence>
<gene>
    <name evidence="1" type="primary">apt</name>
    <name type="ordered locus">HH_1370</name>
</gene>
<comment type="function">
    <text evidence="1">Catalyzes a salvage reaction resulting in the formation of AMP, that is energically less costly than de novo synthesis.</text>
</comment>
<comment type="catalytic activity">
    <reaction evidence="1">
        <text>AMP + diphosphate = 5-phospho-alpha-D-ribose 1-diphosphate + adenine</text>
        <dbReference type="Rhea" id="RHEA:16609"/>
        <dbReference type="ChEBI" id="CHEBI:16708"/>
        <dbReference type="ChEBI" id="CHEBI:33019"/>
        <dbReference type="ChEBI" id="CHEBI:58017"/>
        <dbReference type="ChEBI" id="CHEBI:456215"/>
        <dbReference type="EC" id="2.4.2.7"/>
    </reaction>
</comment>
<comment type="pathway">
    <text evidence="1">Purine metabolism; AMP biosynthesis via salvage pathway; AMP from adenine: step 1/1.</text>
</comment>
<comment type="subunit">
    <text evidence="1">Homodimer.</text>
</comment>
<comment type="subcellular location">
    <subcellularLocation>
        <location evidence="1">Cytoplasm</location>
    </subcellularLocation>
</comment>
<comment type="similarity">
    <text evidence="1">Belongs to the purine/pyrimidine phosphoribosyltransferase family.</text>
</comment>
<feature type="chain" id="PRO_0000149393" description="Adenine phosphoribosyltransferase">
    <location>
        <begin position="1"/>
        <end position="178"/>
    </location>
</feature>
<dbReference type="EC" id="2.4.2.7" evidence="1"/>
<dbReference type="EMBL" id="AE017125">
    <property type="protein sequence ID" value="AAP77967.1"/>
    <property type="molecule type" value="Genomic_DNA"/>
</dbReference>
<dbReference type="RefSeq" id="WP_011116210.1">
    <property type="nucleotide sequence ID" value="NC_004917.1"/>
</dbReference>
<dbReference type="SMR" id="Q7VGF2"/>
<dbReference type="STRING" id="235279.HH_1370"/>
<dbReference type="KEGG" id="hhe:HH_1370"/>
<dbReference type="eggNOG" id="COG0503">
    <property type="taxonomic scope" value="Bacteria"/>
</dbReference>
<dbReference type="HOGENOM" id="CLU_063339_3_0_7"/>
<dbReference type="OrthoDB" id="9803963at2"/>
<dbReference type="UniPathway" id="UPA00588">
    <property type="reaction ID" value="UER00646"/>
</dbReference>
<dbReference type="Proteomes" id="UP000002495">
    <property type="component" value="Chromosome"/>
</dbReference>
<dbReference type="GO" id="GO:0005737">
    <property type="term" value="C:cytoplasm"/>
    <property type="evidence" value="ECO:0007669"/>
    <property type="project" value="UniProtKB-SubCell"/>
</dbReference>
<dbReference type="GO" id="GO:0003999">
    <property type="term" value="F:adenine phosphoribosyltransferase activity"/>
    <property type="evidence" value="ECO:0007669"/>
    <property type="project" value="UniProtKB-UniRule"/>
</dbReference>
<dbReference type="GO" id="GO:0006168">
    <property type="term" value="P:adenine salvage"/>
    <property type="evidence" value="ECO:0007669"/>
    <property type="project" value="InterPro"/>
</dbReference>
<dbReference type="GO" id="GO:0044209">
    <property type="term" value="P:AMP salvage"/>
    <property type="evidence" value="ECO:0007669"/>
    <property type="project" value="UniProtKB-UniRule"/>
</dbReference>
<dbReference type="GO" id="GO:0006166">
    <property type="term" value="P:purine ribonucleoside salvage"/>
    <property type="evidence" value="ECO:0007669"/>
    <property type="project" value="UniProtKB-KW"/>
</dbReference>
<dbReference type="CDD" id="cd06223">
    <property type="entry name" value="PRTases_typeI"/>
    <property type="match status" value="1"/>
</dbReference>
<dbReference type="FunFam" id="3.40.50.2020:FF:000021">
    <property type="entry name" value="Adenine phosphoribosyltransferase"/>
    <property type="match status" value="1"/>
</dbReference>
<dbReference type="Gene3D" id="3.40.50.2020">
    <property type="match status" value="1"/>
</dbReference>
<dbReference type="HAMAP" id="MF_00004">
    <property type="entry name" value="Aden_phosphoribosyltr"/>
    <property type="match status" value="1"/>
</dbReference>
<dbReference type="InterPro" id="IPR005764">
    <property type="entry name" value="Ade_phspho_trans"/>
</dbReference>
<dbReference type="InterPro" id="IPR050120">
    <property type="entry name" value="Adenine_PRTase"/>
</dbReference>
<dbReference type="InterPro" id="IPR000836">
    <property type="entry name" value="PRibTrfase_dom"/>
</dbReference>
<dbReference type="InterPro" id="IPR029057">
    <property type="entry name" value="PRTase-like"/>
</dbReference>
<dbReference type="NCBIfam" id="TIGR01090">
    <property type="entry name" value="apt"/>
    <property type="match status" value="1"/>
</dbReference>
<dbReference type="NCBIfam" id="NF002634">
    <property type="entry name" value="PRK02304.1-3"/>
    <property type="match status" value="1"/>
</dbReference>
<dbReference type="NCBIfam" id="NF002636">
    <property type="entry name" value="PRK02304.1-5"/>
    <property type="match status" value="1"/>
</dbReference>
<dbReference type="PANTHER" id="PTHR11776">
    <property type="entry name" value="ADENINE PHOSPHORIBOSYLTRANSFERASE"/>
    <property type="match status" value="1"/>
</dbReference>
<dbReference type="PANTHER" id="PTHR11776:SF7">
    <property type="entry name" value="PHOSPHORIBOSYLTRANSFERASE DOMAIN-CONTAINING PROTEIN"/>
    <property type="match status" value="1"/>
</dbReference>
<dbReference type="Pfam" id="PF00156">
    <property type="entry name" value="Pribosyltran"/>
    <property type="match status" value="1"/>
</dbReference>
<dbReference type="SUPFAM" id="SSF53271">
    <property type="entry name" value="PRTase-like"/>
    <property type="match status" value="1"/>
</dbReference>
<dbReference type="PROSITE" id="PS00103">
    <property type="entry name" value="PUR_PYR_PR_TRANSFER"/>
    <property type="match status" value="1"/>
</dbReference>
<protein>
    <recommendedName>
        <fullName evidence="1">Adenine phosphoribosyltransferase</fullName>
        <shortName evidence="1">APRT</shortName>
        <ecNumber evidence="1">2.4.2.7</ecNumber>
    </recommendedName>
</protein>